<comment type="function">
    <text>The light-harvesting complex (LHC) functions as a light receptor, it captures and delivers excitation energy to photosystems with which it is closely associated.</text>
</comment>
<comment type="cofactor">
    <text evidence="1">Binds at least 14 chlorophylls (8 Chl-a and 6 Chl-b) and carotenoids such as lutein and neoxanthin.</text>
</comment>
<comment type="subunit">
    <text>The LHC complex consists of chlorophyll a-b binding proteins.</text>
</comment>
<comment type="subcellular location">
    <subcellularLocation>
        <location>Plastid</location>
        <location>Chloroplast thylakoid membrane</location>
        <topology>Multi-pass membrane protein</topology>
    </subcellularLocation>
</comment>
<comment type="domain">
    <text>The N-terminus of the protein extends into the stroma where it is involved with adhesion of granal membranes and post-translational modifications; both are believed to mediate the distribution of excitation energy between photosystems I and II.</text>
</comment>
<comment type="PTM">
    <text evidence="1">Photoregulated by reversible phosphorylation of its threonine residues.</text>
</comment>
<comment type="similarity">
    <text evidence="5">Belongs to the light-harvesting chlorophyll a/b-binding (LHC) protein family.</text>
</comment>
<name>CB25_TOBAC</name>
<accession>P27496</accession>
<evidence type="ECO:0000250" key="1"/>
<evidence type="ECO:0000250" key="2">
    <source>
        <dbReference type="UniProtKB" id="P07371"/>
    </source>
</evidence>
<evidence type="ECO:0000250" key="3">
    <source>
        <dbReference type="UniProtKB" id="P12333"/>
    </source>
</evidence>
<evidence type="ECO:0000255" key="4"/>
<evidence type="ECO:0000305" key="5"/>
<gene>
    <name type="primary">CAB50</name>
</gene>
<keyword id="KW-0007">Acetylation</keyword>
<keyword id="KW-0148">Chlorophyll</keyword>
<keyword id="KW-0150">Chloroplast</keyword>
<keyword id="KW-0157">Chromophore</keyword>
<keyword id="KW-0460">Magnesium</keyword>
<keyword id="KW-0472">Membrane</keyword>
<keyword id="KW-0479">Metal-binding</keyword>
<keyword id="KW-0597">Phosphoprotein</keyword>
<keyword id="KW-0602">Photosynthesis</keyword>
<keyword id="KW-0603">Photosystem I</keyword>
<keyword id="KW-0604">Photosystem II</keyword>
<keyword id="KW-0934">Plastid</keyword>
<keyword id="KW-1185">Reference proteome</keyword>
<keyword id="KW-0793">Thylakoid</keyword>
<keyword id="KW-0809">Transit peptide</keyword>
<keyword id="KW-0812">Transmembrane</keyword>
<keyword id="KW-1133">Transmembrane helix</keyword>
<reference key="1">
    <citation type="submission" date="1990-04" db="EMBL/GenBank/DDBJ databases">
        <authorList>
            <person name="Jin D.S."/>
            <person name="Bogorad L."/>
        </authorList>
    </citation>
    <scope>NUCLEOTIDE SEQUENCE [MRNA]</scope>
    <source>
        <strain>cv. SR1</strain>
        <tissue>Leaf</tissue>
    </source>
</reference>
<sequence length="267" mass="28347">MAAATMALSSSSFAGKAVKLSPSSSEITGNGKVTMRKTVTKAKPLSSGSPWYGPDRVKYLGPFSGESPSYLTGEFPGDYGWDTAGLSADPETFAKNRELEVIHCRWAMLGALGCVFPELLARNGVKFGEAVWFKAGSQIFSEGGLDYLGNPSLVHAQSILAIWACQVVLMGAVEGYRVAGGPLGEVVDPLYPGGSFDPLGLAEDPEAFAELKVKHIKNGRLAMFSMFGFFVQAIVTGKGPLENLADHLADPVNNNAWSYATNFVPGK</sequence>
<dbReference type="EMBL" id="X52742">
    <property type="protein sequence ID" value="CAA36956.1"/>
    <property type="molecule type" value="mRNA"/>
</dbReference>
<dbReference type="PIR" id="S11720">
    <property type="entry name" value="CDNT50"/>
</dbReference>
<dbReference type="SMR" id="P27496"/>
<dbReference type="STRING" id="4097.P27496"/>
<dbReference type="PaxDb" id="4097-P27496"/>
<dbReference type="Proteomes" id="UP000084051">
    <property type="component" value="Unplaced"/>
</dbReference>
<dbReference type="GO" id="GO:0009535">
    <property type="term" value="C:chloroplast thylakoid membrane"/>
    <property type="evidence" value="ECO:0000318"/>
    <property type="project" value="GO_Central"/>
</dbReference>
<dbReference type="GO" id="GO:0009522">
    <property type="term" value="C:photosystem I"/>
    <property type="evidence" value="ECO:0007669"/>
    <property type="project" value="UniProtKB-KW"/>
</dbReference>
<dbReference type="GO" id="GO:0009523">
    <property type="term" value="C:photosystem II"/>
    <property type="evidence" value="ECO:0007669"/>
    <property type="project" value="UniProtKB-KW"/>
</dbReference>
<dbReference type="GO" id="GO:0016168">
    <property type="term" value="F:chlorophyll binding"/>
    <property type="evidence" value="ECO:0007669"/>
    <property type="project" value="UniProtKB-KW"/>
</dbReference>
<dbReference type="GO" id="GO:0046872">
    <property type="term" value="F:metal ion binding"/>
    <property type="evidence" value="ECO:0007669"/>
    <property type="project" value="UniProtKB-KW"/>
</dbReference>
<dbReference type="GO" id="GO:0009768">
    <property type="term" value="P:photosynthesis, light harvesting in photosystem I"/>
    <property type="evidence" value="ECO:0000318"/>
    <property type="project" value="GO_Central"/>
</dbReference>
<dbReference type="GO" id="GO:0009416">
    <property type="term" value="P:response to light stimulus"/>
    <property type="evidence" value="ECO:0000318"/>
    <property type="project" value="GO_Central"/>
</dbReference>
<dbReference type="FunFam" id="1.10.3460.10:FF:000001">
    <property type="entry name" value="Chlorophyll a-b binding protein, chloroplastic"/>
    <property type="match status" value="1"/>
</dbReference>
<dbReference type="Gene3D" id="1.10.3460.10">
    <property type="entry name" value="Chlorophyll a/b binding protein domain"/>
    <property type="match status" value="1"/>
</dbReference>
<dbReference type="InterPro" id="IPR001344">
    <property type="entry name" value="Chloro_AB-bd_pln"/>
</dbReference>
<dbReference type="InterPro" id="IPR022796">
    <property type="entry name" value="Chloroa_b-bind"/>
</dbReference>
<dbReference type="PANTHER" id="PTHR21649">
    <property type="entry name" value="CHLOROPHYLL A/B BINDING PROTEIN"/>
    <property type="match status" value="1"/>
</dbReference>
<dbReference type="Pfam" id="PF00504">
    <property type="entry name" value="Chloroa_b-bind"/>
    <property type="match status" value="1"/>
</dbReference>
<dbReference type="SUPFAM" id="SSF103511">
    <property type="entry name" value="Chlorophyll a-b binding protein"/>
    <property type="match status" value="1"/>
</dbReference>
<feature type="transit peptide" description="Chloroplast" evidence="4">
    <location>
        <begin position="1"/>
        <end position="35"/>
    </location>
</feature>
<feature type="chain" id="PRO_0000003706" description="Chlorophyll a-b binding protein 50, chloroplastic">
    <location>
        <begin position="36"/>
        <end position="267"/>
    </location>
</feature>
<feature type="transmembrane region" description="Helical" evidence="4">
    <location>
        <begin position="101"/>
        <end position="121"/>
    </location>
</feature>
<feature type="transmembrane region" description="Helical" evidence="4">
    <location>
        <begin position="153"/>
        <end position="173"/>
    </location>
</feature>
<feature type="transmembrane region" description="Helical" evidence="4">
    <location>
        <begin position="221"/>
        <end position="241"/>
    </location>
</feature>
<feature type="binding site" description="axial binding residue" evidence="3">
    <location>
        <position position="59"/>
    </location>
    <ligand>
        <name>chlorophyll b</name>
        <dbReference type="ChEBI" id="CHEBI:61721"/>
        <label>1</label>
    </ligand>
    <ligandPart>
        <name>Mg</name>
        <dbReference type="ChEBI" id="CHEBI:25107"/>
    </ligandPart>
</feature>
<feature type="binding site" evidence="1">
    <location>
        <position position="81"/>
    </location>
    <ligand>
        <name>chlorophyll a</name>
        <dbReference type="ChEBI" id="CHEBI:58416"/>
        <label>1</label>
    </ligand>
</feature>
<feature type="binding site" evidence="1">
    <location>
        <position position="87"/>
    </location>
    <ligand>
        <name>chlorophyll a</name>
        <dbReference type="ChEBI" id="CHEBI:58416"/>
        <label>1</label>
    </ligand>
</feature>
<feature type="binding site" description="axial binding residue" evidence="2">
    <location>
        <position position="100"/>
    </location>
    <ligand>
        <name>chlorophyll a</name>
        <dbReference type="ChEBI" id="CHEBI:58416"/>
        <label>1</label>
    </ligand>
    <ligandPart>
        <name>Mg</name>
        <dbReference type="ChEBI" id="CHEBI:25107"/>
    </ligandPart>
</feature>
<feature type="binding site" description="axial binding residue" evidence="2">
    <location>
        <position position="103"/>
    </location>
    <ligand>
        <name>chlorophyll a</name>
        <dbReference type="ChEBI" id="CHEBI:58416"/>
        <label>2</label>
    </ligand>
    <ligandPart>
        <name>Mg</name>
        <dbReference type="ChEBI" id="CHEBI:25107"/>
    </ligandPart>
</feature>
<feature type="binding site" evidence="1">
    <location>
        <position position="105"/>
    </location>
    <ligand>
        <name>chlorophyll b</name>
        <dbReference type="ChEBI" id="CHEBI:61721"/>
        <label>2</label>
    </ligand>
</feature>
<feature type="binding site" description="axial binding residue" evidence="2">
    <location>
        <position position="154"/>
    </location>
    <ligand>
        <name>chlorophyll b</name>
        <dbReference type="ChEBI" id="CHEBI:61721"/>
        <label>2</label>
    </ligand>
    <ligandPart>
        <name>Mg</name>
        <dbReference type="ChEBI" id="CHEBI:25107"/>
    </ligandPart>
</feature>
<feature type="binding site" evidence="1">
    <location>
        <position position="158"/>
    </location>
    <ligand>
        <name>chlorophyll b</name>
        <dbReference type="ChEBI" id="CHEBI:61721"/>
        <label>3</label>
    </ligand>
</feature>
<feature type="binding site" evidence="1">
    <location>
        <position position="166"/>
    </location>
    <ligand>
        <name>chlorophyll b</name>
        <dbReference type="ChEBI" id="CHEBI:61721"/>
        <label>4</label>
    </ligand>
</feature>
<feature type="binding site" evidence="2">
    <location>
        <position position="166"/>
    </location>
    <ligand>
        <name>chlorophyll b</name>
        <dbReference type="ChEBI" id="CHEBI:61721"/>
        <label>5</label>
    </ligand>
</feature>
<feature type="binding site" description="axial binding residue" evidence="2">
    <location>
        <position position="174"/>
    </location>
    <ligand>
        <name>chlorophyll b</name>
        <dbReference type="ChEBI" id="CHEBI:61721"/>
        <label>3</label>
    </ligand>
    <ligandPart>
        <name>Mg</name>
        <dbReference type="ChEBI" id="CHEBI:25107"/>
    </ligandPart>
</feature>
<feature type="binding site" evidence="1">
    <location>
        <position position="177"/>
    </location>
    <ligand>
        <name>chlorophyll b</name>
        <dbReference type="ChEBI" id="CHEBI:61721"/>
        <label>4</label>
    </ligand>
</feature>
<feature type="binding site" evidence="1">
    <location>
        <position position="183"/>
    </location>
    <ligand>
        <name>chlorophyll b</name>
        <dbReference type="ChEBI" id="CHEBI:61721"/>
        <label>2</label>
    </ligand>
</feature>
<feature type="binding site" evidence="1">
    <location>
        <position position="214"/>
    </location>
    <ligand>
        <name>chlorophyll a</name>
        <dbReference type="ChEBI" id="CHEBI:58416"/>
        <label>5</label>
    </ligand>
</feature>
<feature type="binding site" description="axial binding residue" evidence="2">
    <location>
        <position position="218"/>
    </location>
    <ligand>
        <name>chlorophyll a</name>
        <dbReference type="ChEBI" id="CHEBI:58416"/>
        <label>4</label>
    </ligand>
    <ligandPart>
        <name>Mg</name>
        <dbReference type="ChEBI" id="CHEBI:25107"/>
    </ligandPart>
</feature>
<feature type="binding site" evidence="1">
    <location>
        <position position="220"/>
    </location>
    <ligand>
        <name>chlorophyll a</name>
        <dbReference type="ChEBI" id="CHEBI:58416"/>
        <label>1</label>
    </ligand>
</feature>
<feature type="binding site" description="axial binding residue" evidence="2">
    <location>
        <position position="232"/>
    </location>
    <ligand>
        <name>chlorophyll a</name>
        <dbReference type="ChEBI" id="CHEBI:58416"/>
        <label>5</label>
    </ligand>
    <ligandPart>
        <name>Mg</name>
        <dbReference type="ChEBI" id="CHEBI:25107"/>
    </ligandPart>
</feature>
<feature type="binding site" description="axial binding residue" evidence="2">
    <location>
        <position position="247"/>
    </location>
    <ligand>
        <name>chlorophyll a</name>
        <dbReference type="ChEBI" id="CHEBI:58416"/>
        <label>6</label>
    </ligand>
    <ligandPart>
        <name>Mg</name>
        <dbReference type="ChEBI" id="CHEBI:25107"/>
    </ligandPart>
</feature>
<feature type="binding site" evidence="1">
    <location>
        <position position="256"/>
    </location>
    <ligand>
        <name>chlorophyll a</name>
        <dbReference type="ChEBI" id="CHEBI:58416"/>
        <label>6</label>
    </ligand>
</feature>
<feature type="binding site" evidence="1">
    <location>
        <position position="263"/>
    </location>
    <ligand>
        <name>chlorophyll b</name>
        <dbReference type="ChEBI" id="CHEBI:61721"/>
        <label>5</label>
    </ligand>
</feature>
<feature type="modified residue" description="N2-acetylarginine" evidence="1">
    <location>
        <position position="36"/>
    </location>
</feature>
<feature type="modified residue" description="Phosphothreonine" evidence="1">
    <location>
        <position position="38"/>
    </location>
</feature>
<organism>
    <name type="scientific">Nicotiana tabacum</name>
    <name type="common">Common tobacco</name>
    <dbReference type="NCBI Taxonomy" id="4097"/>
    <lineage>
        <taxon>Eukaryota</taxon>
        <taxon>Viridiplantae</taxon>
        <taxon>Streptophyta</taxon>
        <taxon>Embryophyta</taxon>
        <taxon>Tracheophyta</taxon>
        <taxon>Spermatophyta</taxon>
        <taxon>Magnoliopsida</taxon>
        <taxon>eudicotyledons</taxon>
        <taxon>Gunneridae</taxon>
        <taxon>Pentapetalae</taxon>
        <taxon>asterids</taxon>
        <taxon>lamiids</taxon>
        <taxon>Solanales</taxon>
        <taxon>Solanaceae</taxon>
        <taxon>Nicotianoideae</taxon>
        <taxon>Nicotianeae</taxon>
        <taxon>Nicotiana</taxon>
    </lineage>
</organism>
<proteinExistence type="evidence at transcript level"/>
<protein>
    <recommendedName>
        <fullName>Chlorophyll a-b binding protein 50, chloroplastic</fullName>
    </recommendedName>
    <alternativeName>
        <fullName>LHCII type I CAB-50</fullName>
        <shortName>LHCP</shortName>
    </alternativeName>
</protein>